<dbReference type="EMBL" id="AB042240">
    <property type="protein sequence ID" value="BAB47015.1"/>
    <property type="status" value="ALT_SEQ"/>
    <property type="molecule type" value="Genomic_DNA"/>
</dbReference>
<dbReference type="RefSeq" id="NP_114240.2">
    <property type="nucleotide sequence ID" value="NC_002762.1"/>
</dbReference>
<dbReference type="STRING" id="4565.P58271"/>
<dbReference type="PaxDb" id="4565-EPlTAEP00000010078"/>
<dbReference type="GeneID" id="803196"/>
<dbReference type="KEGG" id="taes:803196"/>
<dbReference type="eggNOG" id="ENOG502QWRZ">
    <property type="taxonomic scope" value="Eukaryota"/>
</dbReference>
<dbReference type="Proteomes" id="UP000019116">
    <property type="component" value="Chloroplast"/>
</dbReference>
<dbReference type="ExpressionAtlas" id="P58271">
    <property type="expression patterns" value="baseline"/>
</dbReference>
<dbReference type="GO" id="GO:0009507">
    <property type="term" value="C:chloroplast"/>
    <property type="evidence" value="ECO:0007669"/>
    <property type="project" value="UniProtKB-SubCell"/>
</dbReference>
<dbReference type="GO" id="GO:0003723">
    <property type="term" value="F:RNA binding"/>
    <property type="evidence" value="ECO:0007669"/>
    <property type="project" value="UniProtKB-KW"/>
</dbReference>
<dbReference type="GO" id="GO:0006397">
    <property type="term" value="P:mRNA processing"/>
    <property type="evidence" value="ECO:0007669"/>
    <property type="project" value="UniProtKB-KW"/>
</dbReference>
<dbReference type="GO" id="GO:0008380">
    <property type="term" value="P:RNA splicing"/>
    <property type="evidence" value="ECO:0007669"/>
    <property type="project" value="UniProtKB-UniRule"/>
</dbReference>
<dbReference type="GO" id="GO:0008033">
    <property type="term" value="P:tRNA processing"/>
    <property type="evidence" value="ECO:0007669"/>
    <property type="project" value="UniProtKB-KW"/>
</dbReference>
<dbReference type="HAMAP" id="MF_01390">
    <property type="entry name" value="MatK"/>
    <property type="match status" value="1"/>
</dbReference>
<dbReference type="InterPro" id="IPR024937">
    <property type="entry name" value="Domain_X"/>
</dbReference>
<dbReference type="InterPro" id="IPR002866">
    <property type="entry name" value="Maturase_MatK"/>
</dbReference>
<dbReference type="InterPro" id="IPR024942">
    <property type="entry name" value="Maturase_MatK_N"/>
</dbReference>
<dbReference type="PANTHER" id="PTHR34811">
    <property type="entry name" value="MATURASE K"/>
    <property type="match status" value="1"/>
</dbReference>
<dbReference type="PANTHER" id="PTHR34811:SF1">
    <property type="entry name" value="MATURASE K"/>
    <property type="match status" value="1"/>
</dbReference>
<dbReference type="Pfam" id="PF01348">
    <property type="entry name" value="Intron_maturas2"/>
    <property type="match status" value="1"/>
</dbReference>
<dbReference type="Pfam" id="PF01824">
    <property type="entry name" value="MatK_N"/>
    <property type="match status" value="1"/>
</dbReference>
<comment type="function">
    <text evidence="2">Usually encoded in the trnK tRNA gene intron. Probably assists in splicing its own and other chloroplast group II introns.</text>
</comment>
<comment type="subcellular location">
    <subcellularLocation>
        <location>Plastid</location>
        <location>Chloroplast</location>
    </subcellularLocation>
</comment>
<comment type="RNA editing">
    <location>
        <position position="420" evidence="1"/>
    </location>
</comment>
<comment type="similarity">
    <text evidence="2">Belongs to the intron maturase 2 family. MatK subfamily.</text>
</comment>
<comment type="sequence caution" evidence="3">
    <conflict type="erroneous initiation">
        <sequence resource="EMBL-CDS" id="BAB47015"/>
    </conflict>
    <text>Extended N-terminus.</text>
</comment>
<sequence>MEKFEGYSEKHKSRQQYFVYPLLFQEYIYAFAPDYGLNGSEPVEIVGCNNKKFSSLLVKRLIIRMYQQNFLDNSVNHPNQDRLLDYKNYFYSEFYSQILSEGFAIVVEIPFSLRELFCPKEKEIPKFQNLRSIHSIFPFFEDKFLHLDYLSHIEIPYPIHLEILVQLLQYRIQDVPSLHLLRFLLNYYSNWNSFITSMKSIFIFKKENKRLFRFLYNSYVSEYEFFLLFLRKQSSCLPLASSGTFLERIHFSRKMEHFGIMYPGFSRKTLWFFMDPLMHYVRYQGKAILASKGTFLLKKKWKCYLINLWQYYFCFWTQPRRIHINQLANSCFDFMGYLSSVPKSSLLVRNQMLENSFLIDTRMKKFDTIVHATLLIGYLSKAQFCTGSGHPISKPIWTDLSDWDILDRFGRICRNLFHYYSGSSKKKTLYRLKYILRLSCARTLGPKHKSTVRAFMQWLGSVFLEEFFREEEQVFSLMFAKTTYFSFRGSHSERIWYLDILRINDLVNPLN</sequence>
<feature type="chain" id="PRO_0000143770" description="Maturase K">
    <location>
        <begin position="1"/>
        <end position="511"/>
    </location>
</feature>
<reference key="1">
    <citation type="journal article" date="2000" name="Plant Mol. Biol. Rep.">
        <title>Chinese spring wheat (Triticum aestivum L.) chloroplast genome: complete sequence and contig clones.</title>
        <authorList>
            <person name="Ogihara Y."/>
            <person name="Isono K."/>
            <person name="Kojima T."/>
            <person name="Endo A."/>
            <person name="Hanaoka M."/>
            <person name="Shiina T."/>
            <person name="Terachi T."/>
            <person name="Utsugi S."/>
            <person name="Murata M."/>
            <person name="Mori N."/>
            <person name="Takumi S."/>
            <person name="Ikeo K."/>
            <person name="Gojobori T."/>
            <person name="Murai R."/>
            <person name="Murai K."/>
            <person name="Matsuoka Y."/>
            <person name="Ohnishi Y."/>
            <person name="Tajiri H."/>
            <person name="Tsunewaki K."/>
        </authorList>
    </citation>
    <scope>NUCLEOTIDE SEQUENCE [LARGE SCALE GENOMIC DNA]</scope>
    <source>
        <strain>cv. Chinese Spring</strain>
    </source>
</reference>
<keyword id="KW-0150">Chloroplast</keyword>
<keyword id="KW-0507">mRNA processing</keyword>
<keyword id="KW-0934">Plastid</keyword>
<keyword id="KW-1185">Reference proteome</keyword>
<keyword id="KW-0691">RNA editing</keyword>
<keyword id="KW-0694">RNA-binding</keyword>
<keyword id="KW-0819">tRNA processing</keyword>
<proteinExistence type="inferred from homology"/>
<organism>
    <name type="scientific">Triticum aestivum</name>
    <name type="common">Wheat</name>
    <dbReference type="NCBI Taxonomy" id="4565"/>
    <lineage>
        <taxon>Eukaryota</taxon>
        <taxon>Viridiplantae</taxon>
        <taxon>Streptophyta</taxon>
        <taxon>Embryophyta</taxon>
        <taxon>Tracheophyta</taxon>
        <taxon>Spermatophyta</taxon>
        <taxon>Magnoliopsida</taxon>
        <taxon>Liliopsida</taxon>
        <taxon>Poales</taxon>
        <taxon>Poaceae</taxon>
        <taxon>BOP clade</taxon>
        <taxon>Pooideae</taxon>
        <taxon>Triticodae</taxon>
        <taxon>Triticeae</taxon>
        <taxon>Triticinae</taxon>
        <taxon>Triticum</taxon>
    </lineage>
</organism>
<protein>
    <recommendedName>
        <fullName evidence="2">Maturase K</fullName>
    </recommendedName>
    <alternativeName>
        <fullName evidence="2">Intron maturase</fullName>
    </alternativeName>
</protein>
<name>MATK_WHEAT</name>
<evidence type="ECO:0000250" key="1"/>
<evidence type="ECO:0000255" key="2">
    <source>
        <dbReference type="HAMAP-Rule" id="MF_01390"/>
    </source>
</evidence>
<evidence type="ECO:0000305" key="3"/>
<gene>
    <name evidence="2" type="primary">matK</name>
    <name type="synonym">ycf14</name>
</gene>
<geneLocation type="chloroplast"/>
<accession>P58271</accession>